<gene>
    <name evidence="1" type="primary">katG</name>
    <name type="ordered locus">Syncc9605_0181</name>
</gene>
<keyword id="KW-0349">Heme</keyword>
<keyword id="KW-0376">Hydrogen peroxide</keyword>
<keyword id="KW-0408">Iron</keyword>
<keyword id="KW-0479">Metal-binding</keyword>
<keyword id="KW-0560">Oxidoreductase</keyword>
<keyword id="KW-0575">Peroxidase</keyword>
<dbReference type="EC" id="1.11.1.21" evidence="1"/>
<dbReference type="EMBL" id="CP000110">
    <property type="protein sequence ID" value="ABB33957.1"/>
    <property type="molecule type" value="Genomic_DNA"/>
</dbReference>
<dbReference type="RefSeq" id="WP_011363215.1">
    <property type="nucleotide sequence ID" value="NC_007516.1"/>
</dbReference>
<dbReference type="SMR" id="Q3AN75"/>
<dbReference type="STRING" id="110662.Syncc9605_0181"/>
<dbReference type="PeroxiBase" id="2714">
    <property type="entry name" value="SspCP01_CC9605"/>
</dbReference>
<dbReference type="KEGG" id="syd:Syncc9605_0181"/>
<dbReference type="eggNOG" id="COG0376">
    <property type="taxonomic scope" value="Bacteria"/>
</dbReference>
<dbReference type="HOGENOM" id="CLU_025424_2_0_3"/>
<dbReference type="OrthoDB" id="9759743at2"/>
<dbReference type="GO" id="GO:0005829">
    <property type="term" value="C:cytosol"/>
    <property type="evidence" value="ECO:0007669"/>
    <property type="project" value="TreeGrafter"/>
</dbReference>
<dbReference type="GO" id="GO:0004096">
    <property type="term" value="F:catalase activity"/>
    <property type="evidence" value="ECO:0007669"/>
    <property type="project" value="UniProtKB-UniRule"/>
</dbReference>
<dbReference type="GO" id="GO:0020037">
    <property type="term" value="F:heme binding"/>
    <property type="evidence" value="ECO:0007669"/>
    <property type="project" value="InterPro"/>
</dbReference>
<dbReference type="GO" id="GO:0046872">
    <property type="term" value="F:metal ion binding"/>
    <property type="evidence" value="ECO:0007669"/>
    <property type="project" value="UniProtKB-KW"/>
</dbReference>
<dbReference type="GO" id="GO:0070301">
    <property type="term" value="P:cellular response to hydrogen peroxide"/>
    <property type="evidence" value="ECO:0007669"/>
    <property type="project" value="TreeGrafter"/>
</dbReference>
<dbReference type="GO" id="GO:0042744">
    <property type="term" value="P:hydrogen peroxide catabolic process"/>
    <property type="evidence" value="ECO:0007669"/>
    <property type="project" value="UniProtKB-KW"/>
</dbReference>
<dbReference type="CDD" id="cd08200">
    <property type="entry name" value="catalase_peroxidase_2"/>
    <property type="match status" value="1"/>
</dbReference>
<dbReference type="FunFam" id="1.10.520.10:FF:000002">
    <property type="entry name" value="Catalase-peroxidase"/>
    <property type="match status" value="1"/>
</dbReference>
<dbReference type="Gene3D" id="1.10.520.10">
    <property type="match status" value="2"/>
</dbReference>
<dbReference type="Gene3D" id="1.10.420.10">
    <property type="entry name" value="Peroxidase, domain 2"/>
    <property type="match status" value="2"/>
</dbReference>
<dbReference type="HAMAP" id="MF_01961">
    <property type="entry name" value="Catal_peroxid"/>
    <property type="match status" value="1"/>
</dbReference>
<dbReference type="InterPro" id="IPR000763">
    <property type="entry name" value="Catalase_peroxidase"/>
</dbReference>
<dbReference type="InterPro" id="IPR002016">
    <property type="entry name" value="Haem_peroxidase"/>
</dbReference>
<dbReference type="InterPro" id="IPR010255">
    <property type="entry name" value="Haem_peroxidase_sf"/>
</dbReference>
<dbReference type="InterPro" id="IPR019794">
    <property type="entry name" value="Peroxidases_AS"/>
</dbReference>
<dbReference type="InterPro" id="IPR019793">
    <property type="entry name" value="Peroxidases_heam-ligand_BS"/>
</dbReference>
<dbReference type="NCBIfam" id="TIGR00198">
    <property type="entry name" value="cat_per_HPI"/>
    <property type="match status" value="1"/>
</dbReference>
<dbReference type="NCBIfam" id="NF011635">
    <property type="entry name" value="PRK15061.1"/>
    <property type="match status" value="1"/>
</dbReference>
<dbReference type="PANTHER" id="PTHR30555:SF0">
    <property type="entry name" value="CATALASE-PEROXIDASE"/>
    <property type="match status" value="1"/>
</dbReference>
<dbReference type="PANTHER" id="PTHR30555">
    <property type="entry name" value="HYDROPEROXIDASE I, BIFUNCTIONAL CATALASE-PEROXIDASE"/>
    <property type="match status" value="1"/>
</dbReference>
<dbReference type="Pfam" id="PF00141">
    <property type="entry name" value="peroxidase"/>
    <property type="match status" value="2"/>
</dbReference>
<dbReference type="PRINTS" id="PR00460">
    <property type="entry name" value="BPEROXIDASE"/>
</dbReference>
<dbReference type="PRINTS" id="PR00458">
    <property type="entry name" value="PEROXIDASE"/>
</dbReference>
<dbReference type="SUPFAM" id="SSF48113">
    <property type="entry name" value="Heme-dependent peroxidases"/>
    <property type="match status" value="2"/>
</dbReference>
<dbReference type="PROSITE" id="PS00435">
    <property type="entry name" value="PEROXIDASE_1"/>
    <property type="match status" value="1"/>
</dbReference>
<dbReference type="PROSITE" id="PS00436">
    <property type="entry name" value="PEROXIDASE_2"/>
    <property type="match status" value="1"/>
</dbReference>
<dbReference type="PROSITE" id="PS50873">
    <property type="entry name" value="PEROXIDASE_4"/>
    <property type="match status" value="2"/>
</dbReference>
<reference key="1">
    <citation type="submission" date="2005-07" db="EMBL/GenBank/DDBJ databases">
        <title>Complete sequence of Synechococcus sp. CC9605.</title>
        <authorList>
            <consortium name="US DOE Joint Genome Institute"/>
            <person name="Copeland A."/>
            <person name="Lucas S."/>
            <person name="Lapidus A."/>
            <person name="Barry K."/>
            <person name="Detter J.C."/>
            <person name="Glavina T."/>
            <person name="Hammon N."/>
            <person name="Israni S."/>
            <person name="Pitluck S."/>
            <person name="Schmutz J."/>
            <person name="Martinez M."/>
            <person name="Larimer F."/>
            <person name="Land M."/>
            <person name="Kyrpides N."/>
            <person name="Ivanova N."/>
            <person name="Richardson P."/>
        </authorList>
    </citation>
    <scope>NUCLEOTIDE SEQUENCE [LARGE SCALE GENOMIC DNA]</scope>
    <source>
        <strain>CC9605</strain>
    </source>
</reference>
<comment type="function">
    <text evidence="1">Bifunctional enzyme with both catalase and broad-spectrum peroxidase activity.</text>
</comment>
<comment type="catalytic activity">
    <reaction evidence="1">
        <text>H2O2 + AH2 = A + 2 H2O</text>
        <dbReference type="Rhea" id="RHEA:30275"/>
        <dbReference type="ChEBI" id="CHEBI:13193"/>
        <dbReference type="ChEBI" id="CHEBI:15377"/>
        <dbReference type="ChEBI" id="CHEBI:16240"/>
        <dbReference type="ChEBI" id="CHEBI:17499"/>
        <dbReference type="EC" id="1.11.1.21"/>
    </reaction>
</comment>
<comment type="catalytic activity">
    <reaction evidence="1">
        <text>2 H2O2 = O2 + 2 H2O</text>
        <dbReference type="Rhea" id="RHEA:20309"/>
        <dbReference type="ChEBI" id="CHEBI:15377"/>
        <dbReference type="ChEBI" id="CHEBI:15379"/>
        <dbReference type="ChEBI" id="CHEBI:16240"/>
        <dbReference type="EC" id="1.11.1.21"/>
    </reaction>
</comment>
<comment type="cofactor">
    <cofactor evidence="1">
        <name>heme b</name>
        <dbReference type="ChEBI" id="CHEBI:60344"/>
    </cofactor>
    <text evidence="1">Binds 1 heme b (iron(II)-protoporphyrin IX) group per dimer.</text>
</comment>
<comment type="subunit">
    <text evidence="1">Homodimer or homotetramer.</text>
</comment>
<comment type="PTM">
    <text evidence="1">Formation of the three residue Trp-Tyr-Met cross-link is important for the catalase, but not the peroxidase activity of the enzyme.</text>
</comment>
<comment type="similarity">
    <text evidence="1">Belongs to the peroxidase family. Peroxidase/catalase subfamily.</text>
</comment>
<evidence type="ECO:0000255" key="1">
    <source>
        <dbReference type="HAMAP-Rule" id="MF_01961"/>
    </source>
</evidence>
<protein>
    <recommendedName>
        <fullName evidence="1">Catalase-peroxidase</fullName>
        <shortName evidence="1">CP</shortName>
        <ecNumber evidence="1">1.11.1.21</ecNumber>
    </recommendedName>
    <alternativeName>
        <fullName evidence="1">Peroxidase/catalase</fullName>
    </alternativeName>
</protein>
<feature type="chain" id="PRO_0000354943" description="Catalase-peroxidase">
    <location>
        <begin position="1"/>
        <end position="729"/>
    </location>
</feature>
<feature type="active site" description="Proton acceptor" evidence="1">
    <location>
        <position position="96"/>
    </location>
</feature>
<feature type="binding site" description="axial binding residue" evidence="1">
    <location>
        <position position="259"/>
    </location>
    <ligand>
        <name>heme b</name>
        <dbReference type="ChEBI" id="CHEBI:60344"/>
    </ligand>
    <ligandPart>
        <name>Fe</name>
        <dbReference type="ChEBI" id="CHEBI:18248"/>
    </ligandPart>
</feature>
<feature type="site" description="Transition state stabilizer" evidence="1">
    <location>
        <position position="92"/>
    </location>
</feature>
<feature type="cross-link" description="Tryptophyl-tyrosyl-methioninium (Trp-Tyr) (with M-244)" evidence="1">
    <location>
        <begin position="95"/>
        <end position="218"/>
    </location>
</feature>
<feature type="cross-link" description="Tryptophyl-tyrosyl-methioninium (Tyr-Met) (with W-95)" evidence="1">
    <location>
        <begin position="218"/>
        <end position="244"/>
    </location>
</feature>
<organism>
    <name type="scientific">Synechococcus sp. (strain CC9605)</name>
    <dbReference type="NCBI Taxonomy" id="110662"/>
    <lineage>
        <taxon>Bacteria</taxon>
        <taxon>Bacillati</taxon>
        <taxon>Cyanobacteriota</taxon>
        <taxon>Cyanophyceae</taxon>
        <taxon>Synechococcales</taxon>
        <taxon>Synechococcaceae</taxon>
        <taxon>Synechococcus</taxon>
    </lineage>
</organism>
<accession>Q3AN75</accession>
<sequence length="729" mass="79745">MSDLKCPFSGHTGAVTASAHTGNRQWWPIQIDLGLLHQHHPASNPLGDTFDYPAAFAGLDLEALKADLAALMTDSQDWWPADWGHYGGLFIRMAWHSAGTYRGADGRGGAGHGNQRFAPLNSWPDNTNLDKARRLLWPLKRKYGNAISWADLIILSGNVALESMGFRTFGFAGGRTDIWQPEEDVFWGKETEWLSDERHTTEGALDQPLAAVEMGLVYVNPEGPHGHPDPVASGPDVRDTFARMGMTMEETVALVAGGHTFGKCHGAAPVSQLEAEPEGAELHQQGLGWHNRFESGKGEHTITSGIEGAWKPHPTRWDQGYFEMMFTYEWELTKSPAGAWQWVAKDVKPEHMIPDAHVPGRASAPIMTTADLSLRHDPLMEPVARRFHQDQDAFADAFARAWFKLTHRDLGPRALYLGADVPEEIQIWQDPVPALDHPLIGAVEIKALKQKLLATGCSVGALVATAWGAASTFRGSDRRGGANGGRIRFQPQNTWEVNDPEQLRSVLQTLETVQQQFNAEATGGQRVSMADLIVLAGSAAVEQAAAAGGHSVTVPFLPGRMDASADQTDTASFNLLKPIADGFRNWQRSGLPLRAEECLVDRAQQLGLSAPEMTVLLAGLRVLGANNGGNRQGVLTDRVGVLSNDFCVNLLDMSIRWSPTSEAMEGYIGRDAQGSERWTASRADLVFGSNSQLRAIVEVYAQDDGASRFVSDFVQAWVKVMNLDRFDVR</sequence>
<name>KATG_SYNSC</name>
<proteinExistence type="inferred from homology"/>